<dbReference type="EMBL" id="CP000051">
    <property type="protein sequence ID" value="AAX50801.1"/>
    <property type="molecule type" value="Genomic_DNA"/>
</dbReference>
<dbReference type="RefSeq" id="WP_009871890.1">
    <property type="nucleotide sequence ID" value="NC_007429.1"/>
</dbReference>
<dbReference type="SMR" id="Q3KLH1"/>
<dbReference type="KEGG" id="cta:CTA_0575"/>
<dbReference type="HOGENOM" id="CLU_037562_3_1_0"/>
<dbReference type="Proteomes" id="UP000002532">
    <property type="component" value="Chromosome"/>
</dbReference>
<dbReference type="GO" id="GO:1990904">
    <property type="term" value="C:ribonucleoprotein complex"/>
    <property type="evidence" value="ECO:0007669"/>
    <property type="project" value="UniProtKB-KW"/>
</dbReference>
<dbReference type="GO" id="GO:0005840">
    <property type="term" value="C:ribosome"/>
    <property type="evidence" value="ECO:0007669"/>
    <property type="project" value="UniProtKB-KW"/>
</dbReference>
<dbReference type="GO" id="GO:0019843">
    <property type="term" value="F:rRNA binding"/>
    <property type="evidence" value="ECO:0007669"/>
    <property type="project" value="UniProtKB-UniRule"/>
</dbReference>
<dbReference type="GO" id="GO:0003735">
    <property type="term" value="F:structural constituent of ribosome"/>
    <property type="evidence" value="ECO:0007669"/>
    <property type="project" value="InterPro"/>
</dbReference>
<dbReference type="GO" id="GO:0006412">
    <property type="term" value="P:translation"/>
    <property type="evidence" value="ECO:0007669"/>
    <property type="project" value="UniProtKB-UniRule"/>
</dbReference>
<dbReference type="Gene3D" id="3.30.70.330">
    <property type="match status" value="1"/>
</dbReference>
<dbReference type="HAMAP" id="MF_01369_B">
    <property type="entry name" value="Ribosomal_uL23_B"/>
    <property type="match status" value="1"/>
</dbReference>
<dbReference type="InterPro" id="IPR012677">
    <property type="entry name" value="Nucleotide-bd_a/b_plait_sf"/>
</dbReference>
<dbReference type="InterPro" id="IPR013025">
    <property type="entry name" value="Ribosomal_uL23-like"/>
</dbReference>
<dbReference type="InterPro" id="IPR012678">
    <property type="entry name" value="Ribosomal_uL23/eL15/eS24_sf"/>
</dbReference>
<dbReference type="NCBIfam" id="NF004362">
    <property type="entry name" value="PRK05738.2-2"/>
    <property type="match status" value="1"/>
</dbReference>
<dbReference type="Pfam" id="PF00276">
    <property type="entry name" value="Ribosomal_L23"/>
    <property type="match status" value="1"/>
</dbReference>
<dbReference type="SUPFAM" id="SSF54189">
    <property type="entry name" value="Ribosomal proteins S24e, L23 and L15e"/>
    <property type="match status" value="1"/>
</dbReference>
<sequence length="111" mass="12235">MKDPYDVVKRHYVTEKAKMLEGLSLGDGEGKKKGSFCKDPKYIFIVAGDATKPMIAEAIEAIYSAKGVKVKKVNTMCVKPQPTRIFRGRRKGRTAGFKKAIVTFVDGHSIG</sequence>
<protein>
    <recommendedName>
        <fullName evidence="1">Large ribosomal subunit protein uL23</fullName>
    </recommendedName>
    <alternativeName>
        <fullName evidence="2">50S ribosomal protein L23</fullName>
    </alternativeName>
</protein>
<accession>Q3KLH1</accession>
<evidence type="ECO:0000255" key="1">
    <source>
        <dbReference type="HAMAP-Rule" id="MF_01369"/>
    </source>
</evidence>
<evidence type="ECO:0000305" key="2"/>
<reference key="1">
    <citation type="journal article" date="2005" name="Infect. Immun.">
        <title>Comparative genomic analysis of Chlamydia trachomatis oculotropic and genitotropic strains.</title>
        <authorList>
            <person name="Carlson J.H."/>
            <person name="Porcella S.F."/>
            <person name="McClarty G."/>
            <person name="Caldwell H.D."/>
        </authorList>
    </citation>
    <scope>NUCLEOTIDE SEQUENCE [LARGE SCALE GENOMIC DNA]</scope>
    <source>
        <strain>ATCC VR-571B / DSM 19440 / HAR-13</strain>
    </source>
</reference>
<name>RL23_CHLTA</name>
<proteinExistence type="inferred from homology"/>
<gene>
    <name evidence="1" type="primary">rplW</name>
    <name type="ordered locus">CTA_0575</name>
</gene>
<organism>
    <name type="scientific">Chlamydia trachomatis serovar A (strain ATCC VR-571B / DSM 19440 / HAR-13)</name>
    <dbReference type="NCBI Taxonomy" id="315277"/>
    <lineage>
        <taxon>Bacteria</taxon>
        <taxon>Pseudomonadati</taxon>
        <taxon>Chlamydiota</taxon>
        <taxon>Chlamydiia</taxon>
        <taxon>Chlamydiales</taxon>
        <taxon>Chlamydiaceae</taxon>
        <taxon>Chlamydia/Chlamydophila group</taxon>
        <taxon>Chlamydia</taxon>
    </lineage>
</organism>
<comment type="function">
    <text evidence="1">One of the early assembly proteins it binds 23S rRNA. One of the proteins that surrounds the polypeptide exit tunnel on the outside of the ribosome. Forms the main docking site for trigger factor binding to the ribosome.</text>
</comment>
<comment type="subunit">
    <text evidence="1">Part of the 50S ribosomal subunit. Contacts protein L29, and trigger factor when it is bound to the ribosome.</text>
</comment>
<comment type="similarity">
    <text evidence="1">Belongs to the universal ribosomal protein uL23 family.</text>
</comment>
<feature type="chain" id="PRO_1000068061" description="Large ribosomal subunit protein uL23">
    <location>
        <begin position="1"/>
        <end position="111"/>
    </location>
</feature>
<keyword id="KW-0687">Ribonucleoprotein</keyword>
<keyword id="KW-0689">Ribosomal protein</keyword>
<keyword id="KW-0694">RNA-binding</keyword>
<keyword id="KW-0699">rRNA-binding</keyword>